<dbReference type="EMBL" id="KL198014">
    <property type="protein sequence ID" value="KDQ22993.1"/>
    <property type="molecule type" value="Genomic_DNA"/>
</dbReference>
<dbReference type="STRING" id="1137138.A0A067N4P7"/>
<dbReference type="VEuPathDB" id="FungiDB:PLEOSDRAFT_172202"/>
<dbReference type="HOGENOM" id="CLU_105134_2_0_1"/>
<dbReference type="InParanoid" id="A0A067N4P7"/>
<dbReference type="OrthoDB" id="138913at5338"/>
<dbReference type="Proteomes" id="UP000027073">
    <property type="component" value="Unassembled WGS sequence"/>
</dbReference>
<dbReference type="GO" id="GO:0005576">
    <property type="term" value="C:extracellular region"/>
    <property type="evidence" value="ECO:0007669"/>
    <property type="project" value="UniProtKB-KW"/>
</dbReference>
<dbReference type="GO" id="GO:0009277">
    <property type="term" value="C:fungal-type cell wall"/>
    <property type="evidence" value="ECO:0007669"/>
    <property type="project" value="InterPro"/>
</dbReference>
<dbReference type="GO" id="GO:0016020">
    <property type="term" value="C:membrane"/>
    <property type="evidence" value="ECO:0007669"/>
    <property type="project" value="UniProtKB-KW"/>
</dbReference>
<dbReference type="GO" id="GO:0005199">
    <property type="term" value="F:structural constituent of cell wall"/>
    <property type="evidence" value="ECO:0007669"/>
    <property type="project" value="InterPro"/>
</dbReference>
<dbReference type="CDD" id="cd23507">
    <property type="entry name" value="hydrophobin_I"/>
    <property type="match status" value="1"/>
</dbReference>
<dbReference type="InterPro" id="IPR001338">
    <property type="entry name" value="Hydrophobin"/>
</dbReference>
<dbReference type="Pfam" id="PF01185">
    <property type="entry name" value="Hydrophobin"/>
    <property type="match status" value="1"/>
</dbReference>
<dbReference type="SMART" id="SM00075">
    <property type="entry name" value="HYDRO"/>
    <property type="match status" value="1"/>
</dbReference>
<protein>
    <recommendedName>
        <fullName evidence="3">Unclassified hydrophobin 9</fullName>
    </recommendedName>
</protein>
<name>HYD9_PLEO1</name>
<comment type="function">
    <text evidence="4">Aerial growth, conidiation, and dispersal of filamentous fungi in the environment rely upon a capability of their secreting small amphipathic proteins called hydrophobins (HPBs) with low sequence identity. Class I can self-assemble into an outermost layer of rodlet bundles on aerial cell surfaces, conferring cellular hydrophobicity that supports fungal growth, development and dispersal; whereas Class II form highly ordered films at water-air interfaces through intermolecular interactions but contribute nothing to the rodlet structure.</text>
</comment>
<comment type="subunit">
    <text evidence="1">Self-assembles to form functional amyloid fibrils called rodlets. Self-assembly into fibrillar rodlets occurs spontaneously at hydrophobic:hydrophilic interfaces and the rodlets further associate laterally to form amphipathic monolayers.</text>
</comment>
<comment type="subcellular location">
    <subcellularLocation>
        <location evidence="5">Secreted</location>
    </subcellularLocation>
    <subcellularLocation>
        <location evidence="5">Secreted</location>
        <location evidence="5">Cell wall</location>
    </subcellularLocation>
</comment>
<comment type="similarity">
    <text evidence="4">Belongs to the fungal hydrophobin family.</text>
</comment>
<sequence length="123" mass="12482">MFFFNTKPIVFLVVLSVVATFAAATPAMLARGGGSSCAPSTSLKCCDHVGTFSEVSPYINPLELVGVIAALLGLVGGLFTSVTLALTCSGIDIGGSCNSQTVCCENVVFNGLVNVGCTAIDIL</sequence>
<proteinExistence type="inferred from homology"/>
<gene>
    <name evidence="3" type="primary">Hydph9</name>
    <name type="ORF">PLEOSDRAFT_172202</name>
</gene>
<reference key="1">
    <citation type="journal article" date="2014" name="Proc. Natl. Acad. Sci. U.S.A.">
        <title>Extensive sampling of basidiomycete genomes demonstrates inadequacy of the white-rot/brown-rot paradigm for wood decay fungi.</title>
        <authorList>
            <person name="Riley R."/>
            <person name="Salamov A.A."/>
            <person name="Brown D.W."/>
            <person name="Nagy L.G."/>
            <person name="Floudas D."/>
            <person name="Held B.W."/>
            <person name="Levasseur A."/>
            <person name="Lombard V."/>
            <person name="Morin E."/>
            <person name="Otillar R."/>
            <person name="Lindquist E.A."/>
            <person name="Sun H."/>
            <person name="LaButti K.M."/>
            <person name="Schmutz J."/>
            <person name="Jabbour D."/>
            <person name="Luo H."/>
            <person name="Baker S.E."/>
            <person name="Pisabarro A.G."/>
            <person name="Walton J.D."/>
            <person name="Blanchette R.A."/>
            <person name="Henrissat B."/>
            <person name="Martin F."/>
            <person name="Cullen D."/>
            <person name="Hibbett D.S."/>
            <person name="Grigoriev I.V."/>
        </authorList>
    </citation>
    <scope>NUCLEOTIDE SEQUENCE [LARGE SCALE GENOMIC DNA]</scope>
    <source>
        <strain>PC15</strain>
    </source>
</reference>
<reference key="2">
    <citation type="journal article" date="2021" name="Microbiol. Res.">
        <title>Identification of hydrophobin genes and their physiological functions related to growth and development in Pleurotus ostreatus.</title>
        <authorList>
            <person name="Xu D."/>
            <person name="Wang Y."/>
            <person name="Keerio A.A."/>
            <person name="Ma A."/>
        </authorList>
    </citation>
    <scope>IDENTIFICATION</scope>
</reference>
<organism>
    <name type="scientific">Pleurotus ostreatus (strain PC15)</name>
    <name type="common">Oyster mushroom</name>
    <dbReference type="NCBI Taxonomy" id="1137138"/>
    <lineage>
        <taxon>Eukaryota</taxon>
        <taxon>Fungi</taxon>
        <taxon>Dikarya</taxon>
        <taxon>Basidiomycota</taxon>
        <taxon>Agaricomycotina</taxon>
        <taxon>Agaricomycetes</taxon>
        <taxon>Agaricomycetidae</taxon>
        <taxon>Agaricales</taxon>
        <taxon>Pleurotineae</taxon>
        <taxon>Pleurotaceae</taxon>
        <taxon>Pleurotus</taxon>
    </lineage>
</organism>
<accession>A0A067N4P7</accession>
<feature type="signal peptide" evidence="2">
    <location>
        <begin position="1"/>
        <end position="24"/>
    </location>
</feature>
<feature type="chain" id="PRO_5001646235" description="Unclassified hydrophobin 9">
    <location>
        <begin position="25"/>
        <end position="123"/>
    </location>
</feature>
<feature type="disulfide bond" evidence="1">
    <location>
        <begin position="37"/>
        <end position="103"/>
    </location>
</feature>
<feature type="disulfide bond" evidence="1">
    <location>
        <begin position="45"/>
        <end position="97"/>
    </location>
</feature>
<feature type="disulfide bond" evidence="1">
    <location>
        <begin position="46"/>
        <end position="88"/>
    </location>
</feature>
<feature type="disulfide bond" evidence="1">
    <location>
        <begin position="104"/>
        <end position="117"/>
    </location>
</feature>
<evidence type="ECO:0000250" key="1">
    <source>
        <dbReference type="UniProtKB" id="Q04571"/>
    </source>
</evidence>
<evidence type="ECO:0000255" key="2"/>
<evidence type="ECO:0000303" key="3">
    <source>
    </source>
</evidence>
<evidence type="ECO:0000305" key="4"/>
<evidence type="ECO:0000305" key="5">
    <source>
    </source>
</evidence>
<keyword id="KW-0134">Cell wall</keyword>
<keyword id="KW-1015">Disulfide bond</keyword>
<keyword id="KW-1185">Reference proteome</keyword>
<keyword id="KW-0964">Secreted</keyword>
<keyword id="KW-0732">Signal</keyword>